<feature type="chain" id="PRO_1000055249" description="Large ribosomal subunit protein uL6">
    <location>
        <begin position="1"/>
        <end position="178"/>
    </location>
</feature>
<comment type="function">
    <text evidence="1">This protein binds to the 23S rRNA, and is important in its secondary structure. It is located near the subunit interface in the base of the L7/L12 stalk, and near the tRNA binding site of the peptidyltransferase center.</text>
</comment>
<comment type="subunit">
    <text evidence="1">Part of the 50S ribosomal subunit.</text>
</comment>
<comment type="similarity">
    <text evidence="1">Belongs to the universal ribosomal protein uL6 family.</text>
</comment>
<accession>A2RNN8</accession>
<evidence type="ECO:0000255" key="1">
    <source>
        <dbReference type="HAMAP-Rule" id="MF_01365"/>
    </source>
</evidence>
<evidence type="ECO:0000305" key="2"/>
<proteinExistence type="evidence at protein level"/>
<sequence>MSRIGNKVIVIPAGVSVEVNGATVTVKGPKGELVRSFNENITLEIAENEITVKRPNDTKEMKMLHGTTRALLANMVEGVSNGFSKALEMIGVGYRAQLQGTKLVLSVGKSHQDEVEAPENIKFVVATPTSIVVEGISKEAVGQTAAYIRSRRSPEPYKGKGIRYVGEYVRRKEGKTGK</sequence>
<dbReference type="EMBL" id="AM406671">
    <property type="protein sequence ID" value="CAL98929.1"/>
    <property type="molecule type" value="Genomic_DNA"/>
</dbReference>
<dbReference type="RefSeq" id="WP_011836023.1">
    <property type="nucleotide sequence ID" value="NC_009004.1"/>
</dbReference>
<dbReference type="PDB" id="5MYJ">
    <property type="method" value="EM"/>
    <property type="resolution" value="5.60 A"/>
    <property type="chains" value="BH=1-178"/>
</dbReference>
<dbReference type="PDBsum" id="5MYJ"/>
<dbReference type="EMDB" id="EMD-3581"/>
<dbReference type="SMR" id="A2RNN8"/>
<dbReference type="STRING" id="416870.llmg_2366"/>
<dbReference type="GeneID" id="61110411"/>
<dbReference type="KEGG" id="llm:llmg_2366"/>
<dbReference type="eggNOG" id="COG0097">
    <property type="taxonomic scope" value="Bacteria"/>
</dbReference>
<dbReference type="HOGENOM" id="CLU_065464_1_2_9"/>
<dbReference type="OrthoDB" id="9805007at2"/>
<dbReference type="PhylomeDB" id="A2RNN8"/>
<dbReference type="Proteomes" id="UP000000364">
    <property type="component" value="Chromosome"/>
</dbReference>
<dbReference type="GO" id="GO:0022625">
    <property type="term" value="C:cytosolic large ribosomal subunit"/>
    <property type="evidence" value="ECO:0007669"/>
    <property type="project" value="TreeGrafter"/>
</dbReference>
<dbReference type="GO" id="GO:0019843">
    <property type="term" value="F:rRNA binding"/>
    <property type="evidence" value="ECO:0007669"/>
    <property type="project" value="UniProtKB-UniRule"/>
</dbReference>
<dbReference type="GO" id="GO:0003735">
    <property type="term" value="F:structural constituent of ribosome"/>
    <property type="evidence" value="ECO:0007669"/>
    <property type="project" value="InterPro"/>
</dbReference>
<dbReference type="GO" id="GO:0002181">
    <property type="term" value="P:cytoplasmic translation"/>
    <property type="evidence" value="ECO:0007669"/>
    <property type="project" value="TreeGrafter"/>
</dbReference>
<dbReference type="FunFam" id="3.90.930.12:FF:000001">
    <property type="entry name" value="50S ribosomal protein L6"/>
    <property type="match status" value="1"/>
</dbReference>
<dbReference type="FunFam" id="3.90.930.12:FF:000002">
    <property type="entry name" value="50S ribosomal protein L6"/>
    <property type="match status" value="1"/>
</dbReference>
<dbReference type="Gene3D" id="3.90.930.12">
    <property type="entry name" value="Ribosomal protein L6, alpha-beta domain"/>
    <property type="match status" value="2"/>
</dbReference>
<dbReference type="HAMAP" id="MF_01365_B">
    <property type="entry name" value="Ribosomal_uL6_B"/>
    <property type="match status" value="1"/>
</dbReference>
<dbReference type="InterPro" id="IPR000702">
    <property type="entry name" value="Ribosomal_uL6-like"/>
</dbReference>
<dbReference type="InterPro" id="IPR036789">
    <property type="entry name" value="Ribosomal_uL6-like_a/b-dom_sf"/>
</dbReference>
<dbReference type="InterPro" id="IPR020040">
    <property type="entry name" value="Ribosomal_uL6_a/b-dom"/>
</dbReference>
<dbReference type="InterPro" id="IPR019906">
    <property type="entry name" value="Ribosomal_uL6_bac-type"/>
</dbReference>
<dbReference type="InterPro" id="IPR002358">
    <property type="entry name" value="Ribosomal_uL6_CS"/>
</dbReference>
<dbReference type="NCBIfam" id="TIGR03654">
    <property type="entry name" value="L6_bact"/>
    <property type="match status" value="1"/>
</dbReference>
<dbReference type="PANTHER" id="PTHR11655">
    <property type="entry name" value="60S/50S RIBOSOMAL PROTEIN L6/L9"/>
    <property type="match status" value="1"/>
</dbReference>
<dbReference type="PANTHER" id="PTHR11655:SF14">
    <property type="entry name" value="LARGE RIBOSOMAL SUBUNIT PROTEIN UL6M"/>
    <property type="match status" value="1"/>
</dbReference>
<dbReference type="Pfam" id="PF00347">
    <property type="entry name" value="Ribosomal_L6"/>
    <property type="match status" value="2"/>
</dbReference>
<dbReference type="PIRSF" id="PIRSF002162">
    <property type="entry name" value="Ribosomal_L6"/>
    <property type="match status" value="1"/>
</dbReference>
<dbReference type="PRINTS" id="PR00059">
    <property type="entry name" value="RIBOSOMALL6"/>
</dbReference>
<dbReference type="SUPFAM" id="SSF56053">
    <property type="entry name" value="Ribosomal protein L6"/>
    <property type="match status" value="2"/>
</dbReference>
<dbReference type="PROSITE" id="PS00525">
    <property type="entry name" value="RIBOSOMAL_L6_1"/>
    <property type="match status" value="1"/>
</dbReference>
<keyword id="KW-0002">3D-structure</keyword>
<keyword id="KW-0687">Ribonucleoprotein</keyword>
<keyword id="KW-0689">Ribosomal protein</keyword>
<keyword id="KW-0694">RNA-binding</keyword>
<keyword id="KW-0699">rRNA-binding</keyword>
<protein>
    <recommendedName>
        <fullName evidence="1">Large ribosomal subunit protein uL6</fullName>
    </recommendedName>
    <alternativeName>
        <fullName evidence="2">50S ribosomal protein L6</fullName>
    </alternativeName>
</protein>
<organism>
    <name type="scientific">Lactococcus lactis subsp. cremoris (strain MG1363)</name>
    <dbReference type="NCBI Taxonomy" id="416870"/>
    <lineage>
        <taxon>Bacteria</taxon>
        <taxon>Bacillati</taxon>
        <taxon>Bacillota</taxon>
        <taxon>Bacilli</taxon>
        <taxon>Lactobacillales</taxon>
        <taxon>Streptococcaceae</taxon>
        <taxon>Lactococcus</taxon>
        <taxon>Lactococcus cremoris subsp. cremoris</taxon>
    </lineage>
</organism>
<name>RL6_LACLM</name>
<gene>
    <name evidence="1" type="primary">rplF</name>
    <name type="ordered locus">llmg_2366</name>
</gene>
<reference key="1">
    <citation type="journal article" date="2007" name="J. Bacteriol.">
        <title>The complete genome sequence of the lactic acid bacterial paradigm Lactococcus lactis subsp. cremoris MG1363.</title>
        <authorList>
            <person name="Wegmann U."/>
            <person name="O'Connell-Motherway M."/>
            <person name="Zomer A."/>
            <person name="Buist G."/>
            <person name="Shearman C."/>
            <person name="Canchaya C."/>
            <person name="Ventura M."/>
            <person name="Goesmann A."/>
            <person name="Gasson M.J."/>
            <person name="Kuipers O.P."/>
            <person name="van Sinderen D."/>
            <person name="Kok J."/>
        </authorList>
    </citation>
    <scope>NUCLEOTIDE SEQUENCE [LARGE SCALE GENOMIC DNA]</scope>
    <source>
        <strain>MG1363</strain>
    </source>
</reference>